<gene>
    <name type="primary">CYP76B1</name>
</gene>
<protein>
    <recommendedName>
        <fullName>7-ethoxycoumarin O-deethylase</fullName>
        <shortName>ECOD</shortName>
        <ecNumber>1.14.-.-</ecNumber>
    </recommendedName>
    <alternativeName>
        <fullName>Cytochrome P450 76B1</fullName>
    </alternativeName>
    <alternativeName>
        <fullName>Phenylurea dealkylase</fullName>
    </alternativeName>
</protein>
<organism>
    <name type="scientific">Helianthus tuberosus</name>
    <name type="common">Jerusalem artichoke</name>
    <name type="synonym">Helianthus tomentosus</name>
    <dbReference type="NCBI Taxonomy" id="4233"/>
    <lineage>
        <taxon>Eukaryota</taxon>
        <taxon>Viridiplantae</taxon>
        <taxon>Streptophyta</taxon>
        <taxon>Embryophyta</taxon>
        <taxon>Tracheophyta</taxon>
        <taxon>Spermatophyta</taxon>
        <taxon>Magnoliopsida</taxon>
        <taxon>eudicotyledons</taxon>
        <taxon>Gunneridae</taxon>
        <taxon>Pentapetalae</taxon>
        <taxon>asterids</taxon>
        <taxon>campanulids</taxon>
        <taxon>Asterales</taxon>
        <taxon>Asteraceae</taxon>
        <taxon>Asteroideae</taxon>
        <taxon>Heliantheae alliance</taxon>
        <taxon>Heliantheae</taxon>
        <taxon>Helianthus</taxon>
    </lineage>
</organism>
<name>C76B1_HELTU</name>
<comment type="function">
    <text>Capable of dealkylating a model xenobiotic compound, 7-ethoxycoumarin. Metabolizes with high efficiency a wide range of xenobiotics, including alkoxycoumarins, alkoxyresorufins, and several herbicides of the class of phenylureas. Catalyzes the double N-dealkylation (oxidative N-demethylation) of phenylureas such as chlortoluron and isoproturon with turnover rates comparable to those reported for physiological substrates and produces non-phytotoxic compounds. Could be used for control of herbicide tolerance and selectivity, as well as soil and groundwater bioremediation.</text>
</comment>
<comment type="cofactor">
    <cofactor evidence="1">
        <name>heme</name>
        <dbReference type="ChEBI" id="CHEBI:30413"/>
    </cofactor>
</comment>
<comment type="induction">
    <text>By aminopyrine and other xenobiotics.</text>
</comment>
<comment type="similarity">
    <text evidence="2">Belongs to the cytochrome P450 family.</text>
</comment>
<evidence type="ECO:0000250" key="1"/>
<evidence type="ECO:0000305" key="2"/>
<reference key="1">
    <citation type="journal article" date="1998" name="Plant J.">
        <title>Molecular cloning and functional expression in yeast of CYP76B1, a xenobiotic-inducible 7-ethoxycoumarin O-deethylase from Helianthus tuberosus.</title>
        <authorList>
            <person name="Batard Y."/>
            <person name="Leret M."/>
            <person name="Schalk M."/>
            <person name="Zimmerlin A."/>
            <person name="Durst F."/>
            <person name="Werck-Reichhart D."/>
        </authorList>
    </citation>
    <scope>NUCLEOTIDE SEQUENCE [MRNA]</scope>
    <source>
        <strain>cv. Blanc commun</strain>
        <tissue>Tuber</tissue>
    </source>
</reference>
<reference key="2">
    <citation type="journal article" date="1998" name="Plant Physiol.">
        <title>The chemically inducible plant cytochrome P450 CYP76B1 actively metabolizes phenylureas and other xenobiotics.</title>
        <authorList>
            <person name="Robineau T."/>
            <person name="Batard Y."/>
            <person name="Nedelkina S."/>
            <person name="Cabello-Hurtado F."/>
            <person name="Leret M."/>
            <person name="Sorokine O."/>
            <person name="Didierjean L."/>
            <person name="Werck-Reichhart D."/>
        </authorList>
    </citation>
    <scope>CHARACTERIZATION</scope>
    <source>
        <strain>cv. Blanc commun</strain>
        <tissue>Tuber</tissue>
    </source>
</reference>
<sequence length="490" mass="54991">MDFLIIVSTLLLSYILIWVLGVGKPKNLPPGPTRLPIIGNLHLLGALPHQSLAKLAKIHGPIMSLQLGQITTLVISSATAAEEVLKKQDLAFSTRNVPDAVRAYNHERHSISFLHVCTEWRTLRRIVSSNIFSNSSLEAKQHLRSKKVEELIAYCRKAALSNENVHIGRAAFRTSLNLLSNTIFSKDLTDPYEDSGKEFREVITNIMVDSAKTNLVDVFPVLKKIDPQGIKRGMARHFSKVLGIFDQLIEERMRTGRFEQGDVLDVCLKMMQDNPNEFNHTNIKALFLDLFVAGTDTTSITIEWAMTELLRKPHIMSKAKEELEKVIGKGSIVKEDDVLRLPYLSCIVKEVLRLHPPSPLLLPRKVVTQVELSGYTIPAGTLVFVNAWAIGRDPTVWDDSLEFKPQRFLESRLDVRGHDFDLIPFGAGRRICPGIPLATRMVPIMLGSLLNNFDWKIDTKVPYDVLDMTEKNGTTISKAKPLCVVPIPLN</sequence>
<proteinExistence type="evidence at protein level"/>
<accession>O23976</accession>
<accession>O48603</accession>
<dbReference type="EC" id="1.14.-.-"/>
<dbReference type="EMBL" id="Y09920">
    <property type="protein sequence ID" value="CAA71054.1"/>
    <property type="molecule type" value="mRNA"/>
</dbReference>
<dbReference type="EMBL" id="Y10098">
    <property type="protein sequence ID" value="CAA71178.1"/>
    <property type="molecule type" value="mRNA"/>
</dbReference>
<dbReference type="PIR" id="T10773">
    <property type="entry name" value="T10773"/>
</dbReference>
<dbReference type="PIR" id="T10895">
    <property type="entry name" value="T10895"/>
</dbReference>
<dbReference type="SMR" id="O23976"/>
<dbReference type="KEGG" id="ag:CAA71054"/>
<dbReference type="GO" id="GO:0020037">
    <property type="term" value="F:heme binding"/>
    <property type="evidence" value="ECO:0007669"/>
    <property type="project" value="InterPro"/>
</dbReference>
<dbReference type="GO" id="GO:0005506">
    <property type="term" value="F:iron ion binding"/>
    <property type="evidence" value="ECO:0007669"/>
    <property type="project" value="InterPro"/>
</dbReference>
<dbReference type="GO" id="GO:0004497">
    <property type="term" value="F:monooxygenase activity"/>
    <property type="evidence" value="ECO:0007669"/>
    <property type="project" value="UniProtKB-KW"/>
</dbReference>
<dbReference type="GO" id="GO:0016705">
    <property type="term" value="F:oxidoreductase activity, acting on paired donors, with incorporation or reduction of molecular oxygen"/>
    <property type="evidence" value="ECO:0007669"/>
    <property type="project" value="InterPro"/>
</dbReference>
<dbReference type="GO" id="GO:0009058">
    <property type="term" value="P:biosynthetic process"/>
    <property type="evidence" value="ECO:0007669"/>
    <property type="project" value="UniProtKB-ARBA"/>
</dbReference>
<dbReference type="CDD" id="cd11073">
    <property type="entry name" value="CYP76-like"/>
    <property type="match status" value="1"/>
</dbReference>
<dbReference type="FunFam" id="1.10.630.10:FF:000007">
    <property type="entry name" value="Cytochrome P450 76C4"/>
    <property type="match status" value="1"/>
</dbReference>
<dbReference type="Gene3D" id="1.10.630.10">
    <property type="entry name" value="Cytochrome P450"/>
    <property type="match status" value="1"/>
</dbReference>
<dbReference type="InterPro" id="IPR001128">
    <property type="entry name" value="Cyt_P450"/>
</dbReference>
<dbReference type="InterPro" id="IPR017972">
    <property type="entry name" value="Cyt_P450_CS"/>
</dbReference>
<dbReference type="InterPro" id="IPR002401">
    <property type="entry name" value="Cyt_P450_E_grp-I"/>
</dbReference>
<dbReference type="InterPro" id="IPR036396">
    <property type="entry name" value="Cyt_P450_sf"/>
</dbReference>
<dbReference type="PANTHER" id="PTHR47950">
    <property type="entry name" value="CYTOCHROME P450, FAMILY 76, SUBFAMILY C, POLYPEPTIDE 5-RELATED"/>
    <property type="match status" value="1"/>
</dbReference>
<dbReference type="PANTHER" id="PTHR47950:SF4">
    <property type="entry name" value="GERANIOL 8-HYDROXYLASE-LIKE"/>
    <property type="match status" value="1"/>
</dbReference>
<dbReference type="Pfam" id="PF00067">
    <property type="entry name" value="p450"/>
    <property type="match status" value="1"/>
</dbReference>
<dbReference type="PRINTS" id="PR00463">
    <property type="entry name" value="EP450I"/>
</dbReference>
<dbReference type="PRINTS" id="PR00385">
    <property type="entry name" value="P450"/>
</dbReference>
<dbReference type="SUPFAM" id="SSF48264">
    <property type="entry name" value="Cytochrome P450"/>
    <property type="match status" value="1"/>
</dbReference>
<dbReference type="PROSITE" id="PS00086">
    <property type="entry name" value="CYTOCHROME_P450"/>
    <property type="match status" value="1"/>
</dbReference>
<feature type="chain" id="PRO_0000052140" description="7-ethoxycoumarin O-deethylase">
    <location>
        <begin position="1"/>
        <end position="490"/>
    </location>
</feature>
<feature type="binding site" description="axial binding residue" evidence="1">
    <location>
        <position position="432"/>
    </location>
    <ligand>
        <name>heme</name>
        <dbReference type="ChEBI" id="CHEBI:30413"/>
    </ligand>
    <ligandPart>
        <name>Fe</name>
        <dbReference type="ChEBI" id="CHEBI:18248"/>
    </ligandPart>
</feature>
<feature type="sequence conflict" description="In Ref. 1; CAA71178." evidence="2" ref="1">
    <original>LI</original>
    <variation>HE</variation>
    <location>
        <begin position="16"/>
        <end position="17"/>
    </location>
</feature>
<feature type="sequence conflict" description="In Ref. 1; CAA71178." evidence="2" ref="1">
    <original>D</original>
    <variation>DSA</variation>
    <location>
        <position position="194"/>
    </location>
</feature>
<feature type="sequence conflict" description="In Ref. 1; CAA71178." evidence="2" ref="1">
    <original>K</original>
    <variation>R</variation>
    <location>
        <position position="224"/>
    </location>
</feature>
<keyword id="KW-0349">Heme</keyword>
<keyword id="KW-0408">Iron</keyword>
<keyword id="KW-0479">Metal-binding</keyword>
<keyword id="KW-0503">Monooxygenase</keyword>
<keyword id="KW-0560">Oxidoreductase</keyword>